<organism>
    <name type="scientific">Xylella fastidiosa (strain Temecula1 / ATCC 700964)</name>
    <dbReference type="NCBI Taxonomy" id="183190"/>
    <lineage>
        <taxon>Bacteria</taxon>
        <taxon>Pseudomonadati</taxon>
        <taxon>Pseudomonadota</taxon>
        <taxon>Gammaproteobacteria</taxon>
        <taxon>Lysobacterales</taxon>
        <taxon>Lysobacteraceae</taxon>
        <taxon>Xylella</taxon>
    </lineage>
</organism>
<proteinExistence type="inferred from homology"/>
<dbReference type="EMBL" id="AE009442">
    <property type="protein sequence ID" value="AAO28330.1"/>
    <property type="molecule type" value="Genomic_DNA"/>
</dbReference>
<dbReference type="RefSeq" id="WP_004090119.1">
    <property type="nucleotide sequence ID" value="NC_004556.1"/>
</dbReference>
<dbReference type="SMR" id="Q87E68"/>
<dbReference type="GeneID" id="93904153"/>
<dbReference type="KEGG" id="xft:PD_0451"/>
<dbReference type="HOGENOM" id="CLU_098428_0_0_6"/>
<dbReference type="Proteomes" id="UP000002516">
    <property type="component" value="Chromosome"/>
</dbReference>
<dbReference type="GO" id="GO:1990904">
    <property type="term" value="C:ribonucleoprotein complex"/>
    <property type="evidence" value="ECO:0007669"/>
    <property type="project" value="UniProtKB-KW"/>
</dbReference>
<dbReference type="GO" id="GO:0005840">
    <property type="term" value="C:ribosome"/>
    <property type="evidence" value="ECO:0007669"/>
    <property type="project" value="UniProtKB-KW"/>
</dbReference>
<dbReference type="GO" id="GO:0019843">
    <property type="term" value="F:rRNA binding"/>
    <property type="evidence" value="ECO:0007669"/>
    <property type="project" value="UniProtKB-UniRule"/>
</dbReference>
<dbReference type="GO" id="GO:0003735">
    <property type="term" value="F:structural constituent of ribosome"/>
    <property type="evidence" value="ECO:0007669"/>
    <property type="project" value="InterPro"/>
</dbReference>
<dbReference type="GO" id="GO:0006412">
    <property type="term" value="P:translation"/>
    <property type="evidence" value="ECO:0007669"/>
    <property type="project" value="UniProtKB-UniRule"/>
</dbReference>
<dbReference type="FunFam" id="3.30.1490.10:FF:000001">
    <property type="entry name" value="30S ribosomal protein S8"/>
    <property type="match status" value="1"/>
</dbReference>
<dbReference type="Gene3D" id="3.30.1370.30">
    <property type="match status" value="1"/>
</dbReference>
<dbReference type="Gene3D" id="3.30.1490.10">
    <property type="match status" value="1"/>
</dbReference>
<dbReference type="HAMAP" id="MF_01302_B">
    <property type="entry name" value="Ribosomal_uS8_B"/>
    <property type="match status" value="1"/>
</dbReference>
<dbReference type="InterPro" id="IPR000630">
    <property type="entry name" value="Ribosomal_uS8"/>
</dbReference>
<dbReference type="InterPro" id="IPR047863">
    <property type="entry name" value="Ribosomal_uS8_CS"/>
</dbReference>
<dbReference type="InterPro" id="IPR035987">
    <property type="entry name" value="Ribosomal_uS8_sf"/>
</dbReference>
<dbReference type="NCBIfam" id="NF001109">
    <property type="entry name" value="PRK00136.1"/>
    <property type="match status" value="1"/>
</dbReference>
<dbReference type="PANTHER" id="PTHR11758">
    <property type="entry name" value="40S RIBOSOMAL PROTEIN S15A"/>
    <property type="match status" value="1"/>
</dbReference>
<dbReference type="Pfam" id="PF00410">
    <property type="entry name" value="Ribosomal_S8"/>
    <property type="match status" value="1"/>
</dbReference>
<dbReference type="SUPFAM" id="SSF56047">
    <property type="entry name" value="Ribosomal protein S8"/>
    <property type="match status" value="1"/>
</dbReference>
<dbReference type="PROSITE" id="PS00053">
    <property type="entry name" value="RIBOSOMAL_S8"/>
    <property type="match status" value="1"/>
</dbReference>
<reference key="1">
    <citation type="journal article" date="2003" name="J. Bacteriol.">
        <title>Comparative analyses of the complete genome sequences of Pierce's disease and citrus variegated chlorosis strains of Xylella fastidiosa.</title>
        <authorList>
            <person name="Van Sluys M.A."/>
            <person name="de Oliveira M.C."/>
            <person name="Monteiro-Vitorello C.B."/>
            <person name="Miyaki C.Y."/>
            <person name="Furlan L.R."/>
            <person name="Camargo L.E.A."/>
            <person name="da Silva A.C.R."/>
            <person name="Moon D.H."/>
            <person name="Takita M.A."/>
            <person name="Lemos E.G.M."/>
            <person name="Machado M.A."/>
            <person name="Ferro M.I.T."/>
            <person name="da Silva F.R."/>
            <person name="Goldman M.H.S."/>
            <person name="Goldman G.H."/>
            <person name="Lemos M.V.F."/>
            <person name="El-Dorry H."/>
            <person name="Tsai S.M."/>
            <person name="Carrer H."/>
            <person name="Carraro D.M."/>
            <person name="de Oliveira R.C."/>
            <person name="Nunes L.R."/>
            <person name="Siqueira W.J."/>
            <person name="Coutinho L.L."/>
            <person name="Kimura E.T."/>
            <person name="Ferro E.S."/>
            <person name="Harakava R."/>
            <person name="Kuramae E.E."/>
            <person name="Marino C.L."/>
            <person name="Giglioti E."/>
            <person name="Abreu I.L."/>
            <person name="Alves L.M.C."/>
            <person name="do Amaral A.M."/>
            <person name="Baia G.S."/>
            <person name="Blanco S.R."/>
            <person name="Brito M.S."/>
            <person name="Cannavan F.S."/>
            <person name="Celestino A.V."/>
            <person name="da Cunha A.F."/>
            <person name="Fenille R.C."/>
            <person name="Ferro J.A."/>
            <person name="Formighieri E.F."/>
            <person name="Kishi L.T."/>
            <person name="Leoni S.G."/>
            <person name="Oliveira A.R."/>
            <person name="Rosa V.E. Jr."/>
            <person name="Sassaki F.T."/>
            <person name="Sena J.A.D."/>
            <person name="de Souza A.A."/>
            <person name="Truffi D."/>
            <person name="Tsukumo F."/>
            <person name="Yanai G.M."/>
            <person name="Zaros L.G."/>
            <person name="Civerolo E.L."/>
            <person name="Simpson A.J.G."/>
            <person name="Almeida N.F. Jr."/>
            <person name="Setubal J.C."/>
            <person name="Kitajima J.P."/>
        </authorList>
    </citation>
    <scope>NUCLEOTIDE SEQUENCE [LARGE SCALE GENOMIC DNA]</scope>
    <source>
        <strain>Temecula1 / ATCC 700964</strain>
    </source>
</reference>
<evidence type="ECO:0000255" key="1">
    <source>
        <dbReference type="HAMAP-Rule" id="MF_01302"/>
    </source>
</evidence>
<evidence type="ECO:0000305" key="2"/>
<feature type="chain" id="PRO_0000126530" description="Small ribosomal subunit protein uS8">
    <location>
        <begin position="1"/>
        <end position="132"/>
    </location>
</feature>
<keyword id="KW-1185">Reference proteome</keyword>
<keyword id="KW-0687">Ribonucleoprotein</keyword>
<keyword id="KW-0689">Ribosomal protein</keyword>
<keyword id="KW-0694">RNA-binding</keyword>
<keyword id="KW-0699">rRNA-binding</keyword>
<protein>
    <recommendedName>
        <fullName evidence="1">Small ribosomal subunit protein uS8</fullName>
    </recommendedName>
    <alternativeName>
        <fullName evidence="2">30S ribosomal protein S8</fullName>
    </alternativeName>
</protein>
<sequence length="132" mass="14291">MSMTDPIADMLVRIKNAASVGKPNVRFPFSKVKLAIALVLKNEGYIFDAKVIQSDNSKSDIEVVLKYFEGRPVIRILKRVSRSGLRKYCGKAELPEVLGGLGVSIISTSKGIMTDSKARESGVGGEVLCFVA</sequence>
<gene>
    <name evidence="1" type="primary">rpsH</name>
    <name type="ordered locus">PD_0451</name>
</gene>
<name>RS8_XYLFT</name>
<accession>Q87E68</accession>
<comment type="function">
    <text evidence="1">One of the primary rRNA binding proteins, it binds directly to 16S rRNA central domain where it helps coordinate assembly of the platform of the 30S subunit.</text>
</comment>
<comment type="subunit">
    <text evidence="1">Part of the 30S ribosomal subunit. Contacts proteins S5 and S12.</text>
</comment>
<comment type="similarity">
    <text evidence="1">Belongs to the universal ribosomal protein uS8 family.</text>
</comment>